<name>SECA_ANAPZ</name>
<reference key="1">
    <citation type="journal article" date="2006" name="PLoS Genet.">
        <title>Comparative genomics of emerging human ehrlichiosis agents.</title>
        <authorList>
            <person name="Dunning Hotopp J.C."/>
            <person name="Lin M."/>
            <person name="Madupu R."/>
            <person name="Crabtree J."/>
            <person name="Angiuoli S.V."/>
            <person name="Eisen J.A."/>
            <person name="Seshadri R."/>
            <person name="Ren Q."/>
            <person name="Wu M."/>
            <person name="Utterback T.R."/>
            <person name="Smith S."/>
            <person name="Lewis M."/>
            <person name="Khouri H."/>
            <person name="Zhang C."/>
            <person name="Niu H."/>
            <person name="Lin Q."/>
            <person name="Ohashi N."/>
            <person name="Zhi N."/>
            <person name="Nelson W.C."/>
            <person name="Brinkac L.M."/>
            <person name="Dodson R.J."/>
            <person name="Rosovitz M.J."/>
            <person name="Sundaram J.P."/>
            <person name="Daugherty S.C."/>
            <person name="Davidsen T."/>
            <person name="Durkin A.S."/>
            <person name="Gwinn M.L."/>
            <person name="Haft D.H."/>
            <person name="Selengut J.D."/>
            <person name="Sullivan S.A."/>
            <person name="Zafar N."/>
            <person name="Zhou L."/>
            <person name="Benahmed F."/>
            <person name="Forberger H."/>
            <person name="Halpin R."/>
            <person name="Mulligan S."/>
            <person name="Robinson J."/>
            <person name="White O."/>
            <person name="Rikihisa Y."/>
            <person name="Tettelin H."/>
        </authorList>
    </citation>
    <scope>NUCLEOTIDE SEQUENCE [LARGE SCALE GENOMIC DNA]</scope>
    <source>
        <strain>HZ</strain>
    </source>
</reference>
<organism>
    <name type="scientific">Anaplasma phagocytophilum (strain HZ)</name>
    <dbReference type="NCBI Taxonomy" id="212042"/>
    <lineage>
        <taxon>Bacteria</taxon>
        <taxon>Pseudomonadati</taxon>
        <taxon>Pseudomonadota</taxon>
        <taxon>Alphaproteobacteria</taxon>
        <taxon>Rickettsiales</taxon>
        <taxon>Anaplasmataceae</taxon>
        <taxon>Anaplasma</taxon>
        <taxon>phagocytophilum group</taxon>
    </lineage>
</organism>
<sequence length="873" mass="98576">MLSIAKRVFWPYSSRAKGASVHKIVKSINALEGEMAALSSEALFGKTGEFRKMLSEGTVTLDDLLVPAFAVVREASRRVLDMRHFDVQLIGGIALHRGMIAEMKTGEGKTLVATLAAYLNALESKGVHVVTVNDYLAERDSEWMGKLYSALGISVGCITSSSSDEARKAAYNCDILYSTNNELGFDYLRDNMKFSRENMVQRGYNYAIVDEVDSILIDESRTPLIISGPVERDSSLYGKVDALVRDLEQEDYDIDEKSKTAFLTEDGALKVEQLLISHQLIPEGSSLYSAENIIMMHYVGQALRAHKLYFADKDYIVKNGSVVIIDEFTGRMMDGRRYSDGLHQALEAKEGVRINNENQTLASTTFQNYFRMYKRLSGMTGTAETEADEFLGTYNLQVMQIPTNVPVQRVDLDDDIYCTEEEKYEAVIDFIIECHKRKQPTLVGTISIEKSELLSKLLTMRGIKHSVLNARYHEKEAYIIAQAGKPGAVTIATNMAGRGTDIKLGGNPEMLARNELAGITDEEERAKRINKIIEQAKHDKEIVMQAGGLCIIGTERHESRRIDNQLRGRSGRQGDPGLSKFFLSLEDGLLRIFGSDKVRGMLKRLGMKRGEAIQHKWINRAIERAQKKVEARNYDIRKSLLRFDDVINEQRKVIFAQRNQILDRETYDLVPFYSNLNCDIVSRIIKEKYCDLGHRETAEELSAEVTRIYGIELDIGALSALETREEVIAYLDKVADDLLKKKADGFVHKDENLWDFAARRVLITSLDHLWTDHLAALDSLKCGINLRSVGQKDPLNEFKIEAFYLLEKMLSRFYEMVIQKLAHIELEVQQQPDDGMINLNNSTSQLFGGIARNDRCPCGSGKKFKHCHGMIKV</sequence>
<proteinExistence type="inferred from homology"/>
<comment type="function">
    <text evidence="1">Part of the Sec protein translocase complex. Interacts with the SecYEG preprotein conducting channel. Has a central role in coupling the hydrolysis of ATP to the transfer of proteins into and across the cell membrane, serving both as a receptor for the preprotein-SecB complex and as an ATP-driven molecular motor driving the stepwise translocation of polypeptide chains across the membrane.</text>
</comment>
<comment type="catalytic activity">
    <reaction evidence="1">
        <text>ATP + H2O + cellular proteinSide 1 = ADP + phosphate + cellular proteinSide 2.</text>
        <dbReference type="EC" id="7.4.2.8"/>
    </reaction>
</comment>
<comment type="cofactor">
    <cofactor evidence="1">
        <name>Zn(2+)</name>
        <dbReference type="ChEBI" id="CHEBI:29105"/>
    </cofactor>
    <text evidence="1">May bind 1 zinc ion per subunit.</text>
</comment>
<comment type="subunit">
    <text evidence="1">Monomer and homodimer. Part of the essential Sec protein translocation apparatus which comprises SecA, SecYEG and auxiliary proteins SecDF-YajC and YidC.</text>
</comment>
<comment type="subcellular location">
    <subcellularLocation>
        <location evidence="1">Cell inner membrane</location>
        <topology evidence="1">Peripheral membrane protein</topology>
        <orientation evidence="1">Cytoplasmic side</orientation>
    </subcellularLocation>
    <subcellularLocation>
        <location evidence="1">Cytoplasm</location>
    </subcellularLocation>
    <text evidence="1">Distribution is 50-50.</text>
</comment>
<comment type="similarity">
    <text evidence="1">Belongs to the SecA family.</text>
</comment>
<gene>
    <name evidence="1" type="primary">secA</name>
    <name type="ordered locus">APH_1178</name>
</gene>
<keyword id="KW-0067">ATP-binding</keyword>
<keyword id="KW-0997">Cell inner membrane</keyword>
<keyword id="KW-1003">Cell membrane</keyword>
<keyword id="KW-0963">Cytoplasm</keyword>
<keyword id="KW-0472">Membrane</keyword>
<keyword id="KW-0479">Metal-binding</keyword>
<keyword id="KW-0547">Nucleotide-binding</keyword>
<keyword id="KW-0653">Protein transport</keyword>
<keyword id="KW-1278">Translocase</keyword>
<keyword id="KW-0811">Translocation</keyword>
<keyword id="KW-0813">Transport</keyword>
<keyword id="KW-0862">Zinc</keyword>
<accession>Q2GIT5</accession>
<protein>
    <recommendedName>
        <fullName evidence="1">Protein translocase subunit SecA</fullName>
        <ecNumber evidence="1">7.4.2.8</ecNumber>
    </recommendedName>
</protein>
<dbReference type="EC" id="7.4.2.8" evidence="1"/>
<dbReference type="EMBL" id="CP000235">
    <property type="protein sequence ID" value="ABD44382.1"/>
    <property type="molecule type" value="Genomic_DNA"/>
</dbReference>
<dbReference type="RefSeq" id="WP_011451223.1">
    <property type="nucleotide sequence ID" value="NC_007797.1"/>
</dbReference>
<dbReference type="SMR" id="Q2GIT5"/>
<dbReference type="STRING" id="212042.APH_1178"/>
<dbReference type="PaxDb" id="212042-APH_1178"/>
<dbReference type="EnsemblBacteria" id="ABD44382">
    <property type="protein sequence ID" value="ABD44382"/>
    <property type="gene ID" value="APH_1178"/>
</dbReference>
<dbReference type="GeneID" id="92747924"/>
<dbReference type="KEGG" id="aph:APH_1178"/>
<dbReference type="eggNOG" id="COG0653">
    <property type="taxonomic scope" value="Bacteria"/>
</dbReference>
<dbReference type="HOGENOM" id="CLU_005314_3_0_5"/>
<dbReference type="Proteomes" id="UP000001943">
    <property type="component" value="Chromosome"/>
</dbReference>
<dbReference type="GO" id="GO:0031522">
    <property type="term" value="C:cell envelope Sec protein transport complex"/>
    <property type="evidence" value="ECO:0007669"/>
    <property type="project" value="TreeGrafter"/>
</dbReference>
<dbReference type="GO" id="GO:0005829">
    <property type="term" value="C:cytosol"/>
    <property type="evidence" value="ECO:0007669"/>
    <property type="project" value="TreeGrafter"/>
</dbReference>
<dbReference type="GO" id="GO:0005886">
    <property type="term" value="C:plasma membrane"/>
    <property type="evidence" value="ECO:0007669"/>
    <property type="project" value="UniProtKB-SubCell"/>
</dbReference>
<dbReference type="GO" id="GO:0005524">
    <property type="term" value="F:ATP binding"/>
    <property type="evidence" value="ECO:0007669"/>
    <property type="project" value="UniProtKB-UniRule"/>
</dbReference>
<dbReference type="GO" id="GO:0046872">
    <property type="term" value="F:metal ion binding"/>
    <property type="evidence" value="ECO:0007669"/>
    <property type="project" value="UniProtKB-KW"/>
</dbReference>
<dbReference type="GO" id="GO:0008564">
    <property type="term" value="F:protein-exporting ATPase activity"/>
    <property type="evidence" value="ECO:0007669"/>
    <property type="project" value="UniProtKB-EC"/>
</dbReference>
<dbReference type="GO" id="GO:0065002">
    <property type="term" value="P:intracellular protein transmembrane transport"/>
    <property type="evidence" value="ECO:0007669"/>
    <property type="project" value="UniProtKB-UniRule"/>
</dbReference>
<dbReference type="GO" id="GO:0017038">
    <property type="term" value="P:protein import"/>
    <property type="evidence" value="ECO:0007669"/>
    <property type="project" value="InterPro"/>
</dbReference>
<dbReference type="GO" id="GO:0006605">
    <property type="term" value="P:protein targeting"/>
    <property type="evidence" value="ECO:0007669"/>
    <property type="project" value="UniProtKB-UniRule"/>
</dbReference>
<dbReference type="GO" id="GO:0043952">
    <property type="term" value="P:protein transport by the Sec complex"/>
    <property type="evidence" value="ECO:0007669"/>
    <property type="project" value="TreeGrafter"/>
</dbReference>
<dbReference type="CDD" id="cd17928">
    <property type="entry name" value="DEXDc_SecA"/>
    <property type="match status" value="1"/>
</dbReference>
<dbReference type="CDD" id="cd18803">
    <property type="entry name" value="SF2_C_secA"/>
    <property type="match status" value="1"/>
</dbReference>
<dbReference type="FunFam" id="3.40.50.300:FF:000113">
    <property type="entry name" value="Preprotein translocase subunit SecA"/>
    <property type="match status" value="1"/>
</dbReference>
<dbReference type="FunFam" id="3.90.1440.10:FF:000001">
    <property type="entry name" value="Preprotein translocase subunit SecA"/>
    <property type="match status" value="1"/>
</dbReference>
<dbReference type="Gene3D" id="1.10.3060.10">
    <property type="entry name" value="Helical scaffold and wing domains of SecA"/>
    <property type="match status" value="1"/>
</dbReference>
<dbReference type="Gene3D" id="3.40.50.300">
    <property type="entry name" value="P-loop containing nucleotide triphosphate hydrolases"/>
    <property type="match status" value="2"/>
</dbReference>
<dbReference type="Gene3D" id="3.90.1440.10">
    <property type="entry name" value="SecA, preprotein cross-linking domain"/>
    <property type="match status" value="1"/>
</dbReference>
<dbReference type="HAMAP" id="MF_01382">
    <property type="entry name" value="SecA"/>
    <property type="match status" value="1"/>
</dbReference>
<dbReference type="InterPro" id="IPR014001">
    <property type="entry name" value="Helicase_ATP-bd"/>
</dbReference>
<dbReference type="InterPro" id="IPR001650">
    <property type="entry name" value="Helicase_C-like"/>
</dbReference>
<dbReference type="InterPro" id="IPR027417">
    <property type="entry name" value="P-loop_NTPase"/>
</dbReference>
<dbReference type="InterPro" id="IPR004027">
    <property type="entry name" value="SEC_C_motif"/>
</dbReference>
<dbReference type="InterPro" id="IPR000185">
    <property type="entry name" value="SecA"/>
</dbReference>
<dbReference type="InterPro" id="IPR020937">
    <property type="entry name" value="SecA_CS"/>
</dbReference>
<dbReference type="InterPro" id="IPR011115">
    <property type="entry name" value="SecA_DEAD"/>
</dbReference>
<dbReference type="InterPro" id="IPR014018">
    <property type="entry name" value="SecA_motor_DEAD"/>
</dbReference>
<dbReference type="InterPro" id="IPR011130">
    <property type="entry name" value="SecA_preprotein_X-link_dom"/>
</dbReference>
<dbReference type="InterPro" id="IPR044722">
    <property type="entry name" value="SecA_SF2_C"/>
</dbReference>
<dbReference type="InterPro" id="IPR011116">
    <property type="entry name" value="SecA_Wing/Scaffold"/>
</dbReference>
<dbReference type="InterPro" id="IPR036266">
    <property type="entry name" value="SecA_Wing/Scaffold_sf"/>
</dbReference>
<dbReference type="InterPro" id="IPR036670">
    <property type="entry name" value="SecA_X-link_sf"/>
</dbReference>
<dbReference type="NCBIfam" id="NF009538">
    <property type="entry name" value="PRK12904.1"/>
    <property type="match status" value="1"/>
</dbReference>
<dbReference type="NCBIfam" id="TIGR00963">
    <property type="entry name" value="secA"/>
    <property type="match status" value="1"/>
</dbReference>
<dbReference type="PANTHER" id="PTHR30612:SF0">
    <property type="entry name" value="CHLOROPLAST PROTEIN-TRANSPORTING ATPASE"/>
    <property type="match status" value="1"/>
</dbReference>
<dbReference type="PANTHER" id="PTHR30612">
    <property type="entry name" value="SECA INNER MEMBRANE COMPONENT OF SEC PROTEIN SECRETION SYSTEM"/>
    <property type="match status" value="1"/>
</dbReference>
<dbReference type="Pfam" id="PF21090">
    <property type="entry name" value="P-loop_SecA"/>
    <property type="match status" value="1"/>
</dbReference>
<dbReference type="Pfam" id="PF02810">
    <property type="entry name" value="SEC-C"/>
    <property type="match status" value="1"/>
</dbReference>
<dbReference type="Pfam" id="PF07517">
    <property type="entry name" value="SecA_DEAD"/>
    <property type="match status" value="1"/>
</dbReference>
<dbReference type="Pfam" id="PF01043">
    <property type="entry name" value="SecA_PP_bind"/>
    <property type="match status" value="1"/>
</dbReference>
<dbReference type="Pfam" id="PF07516">
    <property type="entry name" value="SecA_SW"/>
    <property type="match status" value="1"/>
</dbReference>
<dbReference type="PRINTS" id="PR00906">
    <property type="entry name" value="SECA"/>
</dbReference>
<dbReference type="SMART" id="SM00957">
    <property type="entry name" value="SecA_DEAD"/>
    <property type="match status" value="1"/>
</dbReference>
<dbReference type="SMART" id="SM00958">
    <property type="entry name" value="SecA_PP_bind"/>
    <property type="match status" value="1"/>
</dbReference>
<dbReference type="SUPFAM" id="SSF81886">
    <property type="entry name" value="Helical scaffold and wing domains of SecA"/>
    <property type="match status" value="1"/>
</dbReference>
<dbReference type="SUPFAM" id="SSF52540">
    <property type="entry name" value="P-loop containing nucleoside triphosphate hydrolases"/>
    <property type="match status" value="2"/>
</dbReference>
<dbReference type="SUPFAM" id="SSF81767">
    <property type="entry name" value="Pre-protein crosslinking domain of SecA"/>
    <property type="match status" value="1"/>
</dbReference>
<dbReference type="PROSITE" id="PS01312">
    <property type="entry name" value="SECA"/>
    <property type="match status" value="1"/>
</dbReference>
<dbReference type="PROSITE" id="PS51196">
    <property type="entry name" value="SECA_MOTOR_DEAD"/>
    <property type="match status" value="1"/>
</dbReference>
<evidence type="ECO:0000255" key="1">
    <source>
        <dbReference type="HAMAP-Rule" id="MF_01382"/>
    </source>
</evidence>
<feature type="chain" id="PRO_0000320725" description="Protein translocase subunit SecA">
    <location>
        <begin position="1"/>
        <end position="873"/>
    </location>
</feature>
<feature type="binding site" evidence="1">
    <location>
        <position position="88"/>
    </location>
    <ligand>
        <name>ATP</name>
        <dbReference type="ChEBI" id="CHEBI:30616"/>
    </ligand>
</feature>
<feature type="binding site" evidence="1">
    <location>
        <begin position="106"/>
        <end position="110"/>
    </location>
    <ligand>
        <name>ATP</name>
        <dbReference type="ChEBI" id="CHEBI:30616"/>
    </ligand>
</feature>
<feature type="binding site" evidence="1">
    <location>
        <position position="501"/>
    </location>
    <ligand>
        <name>ATP</name>
        <dbReference type="ChEBI" id="CHEBI:30616"/>
    </ligand>
</feature>
<feature type="binding site" evidence="1">
    <location>
        <position position="856"/>
    </location>
    <ligand>
        <name>Zn(2+)</name>
        <dbReference type="ChEBI" id="CHEBI:29105"/>
    </ligand>
</feature>
<feature type="binding site" evidence="1">
    <location>
        <position position="858"/>
    </location>
    <ligand>
        <name>Zn(2+)</name>
        <dbReference type="ChEBI" id="CHEBI:29105"/>
    </ligand>
</feature>
<feature type="binding site" evidence="1">
    <location>
        <position position="867"/>
    </location>
    <ligand>
        <name>Zn(2+)</name>
        <dbReference type="ChEBI" id="CHEBI:29105"/>
    </ligand>
</feature>
<feature type="binding site" evidence="1">
    <location>
        <position position="868"/>
    </location>
    <ligand>
        <name>Zn(2+)</name>
        <dbReference type="ChEBI" id="CHEBI:29105"/>
    </ligand>
</feature>